<evidence type="ECO:0000250" key="1"/>
<evidence type="ECO:0000250" key="2">
    <source>
        <dbReference type="UniProtKB" id="P00157"/>
    </source>
</evidence>
<evidence type="ECO:0000255" key="3">
    <source>
        <dbReference type="PROSITE-ProRule" id="PRU00967"/>
    </source>
</evidence>
<evidence type="ECO:0000255" key="4">
    <source>
        <dbReference type="PROSITE-ProRule" id="PRU00968"/>
    </source>
</evidence>
<gene>
    <name type="primary">MT-CYB</name>
    <name type="synonym">COB</name>
    <name type="synonym">CYTB</name>
    <name type="synonym">MTCYB</name>
</gene>
<proteinExistence type="inferred from homology"/>
<comment type="function">
    <text evidence="2">Component of the ubiquinol-cytochrome c reductase complex (complex III or cytochrome b-c1 complex) that is part of the mitochondrial respiratory chain. The b-c1 complex mediates electron transfer from ubiquinol to cytochrome c. Contributes to the generation of a proton gradient across the mitochondrial membrane that is then used for ATP synthesis.</text>
</comment>
<comment type="cofactor">
    <cofactor evidence="2">
        <name>heme b</name>
        <dbReference type="ChEBI" id="CHEBI:60344"/>
    </cofactor>
    <text evidence="2">Binds 2 heme b groups non-covalently.</text>
</comment>
<comment type="subunit">
    <text evidence="2">The cytochrome bc1 complex contains 3 respiratory subunits (MT-CYB, CYC1 and UQCRFS1), 2 core proteins (UQCRC1 and UQCRC2) and probably 6 low-molecular weight proteins.</text>
</comment>
<comment type="subcellular location">
    <subcellularLocation>
        <location evidence="2">Mitochondrion inner membrane</location>
        <topology evidence="2">Multi-pass membrane protein</topology>
    </subcellularLocation>
</comment>
<comment type="miscellaneous">
    <text evidence="1">Heme 1 (or BL or b562) is low-potential and absorbs at about 562 nm, and heme 2 (or BH or b566) is high-potential and absorbs at about 566 nm.</text>
</comment>
<comment type="similarity">
    <text evidence="3 4">Belongs to the cytochrome b family.</text>
</comment>
<comment type="caution">
    <text evidence="2">The full-length protein contains only eight transmembrane helices, not nine as predicted by bioinformatics tools.</text>
</comment>
<geneLocation type="mitochondrion"/>
<feature type="chain" id="PRO_0000061263" description="Cytochrome b">
    <location>
        <begin position="1"/>
        <end position="372"/>
    </location>
</feature>
<feature type="transmembrane region" description="Helical" evidence="2">
    <location>
        <begin position="25"/>
        <end position="45"/>
    </location>
</feature>
<feature type="transmembrane region" description="Helical" evidence="2">
    <location>
        <begin position="69"/>
        <end position="90"/>
    </location>
</feature>
<feature type="transmembrane region" description="Helical" evidence="2">
    <location>
        <begin position="105"/>
        <end position="125"/>
    </location>
</feature>
<feature type="transmembrane region" description="Helical" evidence="2">
    <location>
        <begin position="170"/>
        <end position="190"/>
    </location>
</feature>
<feature type="transmembrane region" description="Helical" evidence="2">
    <location>
        <begin position="218"/>
        <end position="238"/>
    </location>
</feature>
<feature type="transmembrane region" description="Helical" evidence="2">
    <location>
        <begin position="280"/>
        <end position="300"/>
    </location>
</feature>
<feature type="transmembrane region" description="Helical" evidence="2">
    <location>
        <begin position="312"/>
        <end position="332"/>
    </location>
</feature>
<feature type="transmembrane region" description="Helical" evidence="2">
    <location>
        <begin position="339"/>
        <end position="358"/>
    </location>
</feature>
<feature type="binding site" description="axial binding residue" evidence="2">
    <location>
        <position position="75"/>
    </location>
    <ligand>
        <name>heme b</name>
        <dbReference type="ChEBI" id="CHEBI:60344"/>
        <label>b562</label>
    </ligand>
    <ligandPart>
        <name>Fe</name>
        <dbReference type="ChEBI" id="CHEBI:18248"/>
    </ligandPart>
</feature>
<feature type="binding site" description="axial binding residue" evidence="2">
    <location>
        <position position="89"/>
    </location>
    <ligand>
        <name>heme b</name>
        <dbReference type="ChEBI" id="CHEBI:60344"/>
        <label>b566</label>
    </ligand>
    <ligandPart>
        <name>Fe</name>
        <dbReference type="ChEBI" id="CHEBI:18248"/>
    </ligandPart>
</feature>
<feature type="binding site" description="axial binding residue" evidence="2">
    <location>
        <position position="174"/>
    </location>
    <ligand>
        <name>heme b</name>
        <dbReference type="ChEBI" id="CHEBI:60344"/>
        <label>b562</label>
    </ligand>
    <ligandPart>
        <name>Fe</name>
        <dbReference type="ChEBI" id="CHEBI:18248"/>
    </ligandPart>
</feature>
<feature type="binding site" description="axial binding residue" evidence="2">
    <location>
        <position position="188"/>
    </location>
    <ligand>
        <name>heme b</name>
        <dbReference type="ChEBI" id="CHEBI:60344"/>
        <label>b566</label>
    </ligand>
    <ligandPart>
        <name>Fe</name>
        <dbReference type="ChEBI" id="CHEBI:18248"/>
    </ligandPart>
</feature>
<feature type="binding site" evidence="2">
    <location>
        <position position="193"/>
    </location>
    <ligand>
        <name>a ubiquinone</name>
        <dbReference type="ChEBI" id="CHEBI:16389"/>
    </ligand>
</feature>
<organism>
    <name type="scientific">Naja kaouthia</name>
    <name type="common">Monocled cobra</name>
    <name type="synonym">Naja siamensis</name>
    <dbReference type="NCBI Taxonomy" id="8649"/>
    <lineage>
        <taxon>Eukaryota</taxon>
        <taxon>Metazoa</taxon>
        <taxon>Chordata</taxon>
        <taxon>Craniata</taxon>
        <taxon>Vertebrata</taxon>
        <taxon>Euteleostomi</taxon>
        <taxon>Lepidosauria</taxon>
        <taxon>Squamata</taxon>
        <taxon>Bifurcata</taxon>
        <taxon>Unidentata</taxon>
        <taxon>Episquamata</taxon>
        <taxon>Toxicofera</taxon>
        <taxon>Serpentes</taxon>
        <taxon>Colubroidea</taxon>
        <taxon>Elapidae</taxon>
        <taxon>Elapinae</taxon>
        <taxon>Naja</taxon>
    </lineage>
</organism>
<name>CYB_NAJKA</name>
<sequence>MSNQHAXMXSNLLPVGSNISTWWNFGSMLLACLMLQIMTGFFLAIHYTANISLAFSSVIHITRDVPYGWIMQNLHTISASLFFICIYTHIARGLYYGLYLNKEVWLSGTALLVTLMATAFFGYVLPWGQMSFWAATVITNLLTAIPYLGVTLTTWLWGGFSINDPTLTRFFALHFILPFIIISLSSVHIILLHSEGSNNPLGTNSDIDKIPFHPYHSYKDMLMITSMITLLLLILSFSPDLLNDPENFSKANPLVTPQHIKPEWYFLFAYGILRSIPNKLGGTLALLLSVMILTTTPFTHTSFTRSMMFRPLSQILFWTLIATFITITWTASKPVEPPFITISQTTSIFYFSFFILTPLLGWTENKMMMTNN</sequence>
<accession>Q9MLJ3</accession>
<dbReference type="EMBL" id="AF217835">
    <property type="protein sequence ID" value="AAF37254.1"/>
    <property type="molecule type" value="Genomic_DNA"/>
</dbReference>
<dbReference type="GO" id="GO:0005743">
    <property type="term" value="C:mitochondrial inner membrane"/>
    <property type="evidence" value="ECO:0007669"/>
    <property type="project" value="UniProtKB-SubCell"/>
</dbReference>
<dbReference type="GO" id="GO:0045275">
    <property type="term" value="C:respiratory chain complex III"/>
    <property type="evidence" value="ECO:0007669"/>
    <property type="project" value="InterPro"/>
</dbReference>
<dbReference type="GO" id="GO:0046872">
    <property type="term" value="F:metal ion binding"/>
    <property type="evidence" value="ECO:0007669"/>
    <property type="project" value="UniProtKB-KW"/>
</dbReference>
<dbReference type="GO" id="GO:0008121">
    <property type="term" value="F:ubiquinol-cytochrome-c reductase activity"/>
    <property type="evidence" value="ECO:0007669"/>
    <property type="project" value="InterPro"/>
</dbReference>
<dbReference type="GO" id="GO:0006122">
    <property type="term" value="P:mitochondrial electron transport, ubiquinol to cytochrome c"/>
    <property type="evidence" value="ECO:0007669"/>
    <property type="project" value="TreeGrafter"/>
</dbReference>
<dbReference type="CDD" id="cd00290">
    <property type="entry name" value="cytochrome_b_C"/>
    <property type="match status" value="1"/>
</dbReference>
<dbReference type="CDD" id="cd00284">
    <property type="entry name" value="Cytochrome_b_N"/>
    <property type="match status" value="1"/>
</dbReference>
<dbReference type="Gene3D" id="1.20.810.10">
    <property type="entry name" value="Cytochrome Bc1 Complex, Chain C"/>
    <property type="match status" value="1"/>
</dbReference>
<dbReference type="InterPro" id="IPR005798">
    <property type="entry name" value="Cyt_b/b6_C"/>
</dbReference>
<dbReference type="InterPro" id="IPR036150">
    <property type="entry name" value="Cyt_b/b6_C_sf"/>
</dbReference>
<dbReference type="InterPro" id="IPR005797">
    <property type="entry name" value="Cyt_b/b6_N"/>
</dbReference>
<dbReference type="InterPro" id="IPR027387">
    <property type="entry name" value="Cytb/b6-like_sf"/>
</dbReference>
<dbReference type="InterPro" id="IPR030689">
    <property type="entry name" value="Cytochrome_b"/>
</dbReference>
<dbReference type="InterPro" id="IPR048260">
    <property type="entry name" value="Cytochrome_b_C_euk/bac"/>
</dbReference>
<dbReference type="InterPro" id="IPR048259">
    <property type="entry name" value="Cytochrome_b_N_euk/bac"/>
</dbReference>
<dbReference type="InterPro" id="IPR016174">
    <property type="entry name" value="Di-haem_cyt_TM"/>
</dbReference>
<dbReference type="PANTHER" id="PTHR19271">
    <property type="entry name" value="CYTOCHROME B"/>
    <property type="match status" value="1"/>
</dbReference>
<dbReference type="PANTHER" id="PTHR19271:SF16">
    <property type="entry name" value="CYTOCHROME B"/>
    <property type="match status" value="1"/>
</dbReference>
<dbReference type="Pfam" id="PF00032">
    <property type="entry name" value="Cytochrom_B_C"/>
    <property type="match status" value="1"/>
</dbReference>
<dbReference type="Pfam" id="PF00033">
    <property type="entry name" value="Cytochrome_B"/>
    <property type="match status" value="1"/>
</dbReference>
<dbReference type="PIRSF" id="PIRSF038885">
    <property type="entry name" value="COB"/>
    <property type="match status" value="1"/>
</dbReference>
<dbReference type="SUPFAM" id="SSF81648">
    <property type="entry name" value="a domain/subunit of cytochrome bc1 complex (Ubiquinol-cytochrome c reductase)"/>
    <property type="match status" value="1"/>
</dbReference>
<dbReference type="SUPFAM" id="SSF81342">
    <property type="entry name" value="Transmembrane di-heme cytochromes"/>
    <property type="match status" value="1"/>
</dbReference>
<dbReference type="PROSITE" id="PS51003">
    <property type="entry name" value="CYTB_CTER"/>
    <property type="match status" value="1"/>
</dbReference>
<dbReference type="PROSITE" id="PS51002">
    <property type="entry name" value="CYTB_NTER"/>
    <property type="match status" value="1"/>
</dbReference>
<reference key="1">
    <citation type="journal article" date="2000" name="Mol. Phylogenet. Evol.">
        <title>Phylogenetic relationships of elapid snakes based on cytochrome b mtDNA sequences.</title>
        <authorList>
            <person name="Slowinski J.B."/>
            <person name="Keogh J.S."/>
        </authorList>
    </citation>
    <scope>NUCLEOTIDE SEQUENCE [GENOMIC DNA]</scope>
</reference>
<keyword id="KW-0249">Electron transport</keyword>
<keyword id="KW-0349">Heme</keyword>
<keyword id="KW-0408">Iron</keyword>
<keyword id="KW-0472">Membrane</keyword>
<keyword id="KW-0479">Metal-binding</keyword>
<keyword id="KW-0496">Mitochondrion</keyword>
<keyword id="KW-0999">Mitochondrion inner membrane</keyword>
<keyword id="KW-0679">Respiratory chain</keyword>
<keyword id="KW-0812">Transmembrane</keyword>
<keyword id="KW-1133">Transmembrane helix</keyword>
<keyword id="KW-0813">Transport</keyword>
<keyword id="KW-0830">Ubiquinone</keyword>
<protein>
    <recommendedName>
        <fullName>Cytochrome b</fullName>
    </recommendedName>
    <alternativeName>
        <fullName>Complex III subunit 3</fullName>
    </alternativeName>
    <alternativeName>
        <fullName>Complex III subunit III</fullName>
    </alternativeName>
    <alternativeName>
        <fullName>Cytochrome b-c1 complex subunit 3</fullName>
    </alternativeName>
    <alternativeName>
        <fullName>Ubiquinol-cytochrome-c reductase complex cytochrome b subunit</fullName>
    </alternativeName>
</protein>